<protein>
    <recommendedName>
        <fullName evidence="1">ATP synthase gamma chain</fullName>
    </recommendedName>
    <alternativeName>
        <fullName evidence="1">ATP synthase F1 sector gamma subunit</fullName>
    </alternativeName>
    <alternativeName>
        <fullName evidence="1">F-ATPase gamma subunit</fullName>
    </alternativeName>
</protein>
<accession>A1SHJ0</accession>
<keyword id="KW-0066">ATP synthesis</keyword>
<keyword id="KW-1003">Cell membrane</keyword>
<keyword id="KW-0139">CF(1)</keyword>
<keyword id="KW-0375">Hydrogen ion transport</keyword>
<keyword id="KW-0406">Ion transport</keyword>
<keyword id="KW-0472">Membrane</keyword>
<keyword id="KW-1185">Reference proteome</keyword>
<keyword id="KW-0813">Transport</keyword>
<proteinExistence type="inferred from homology"/>
<gene>
    <name evidence="1" type="primary">atpG</name>
    <name type="ordered locus">Noca_1762</name>
</gene>
<evidence type="ECO:0000255" key="1">
    <source>
        <dbReference type="HAMAP-Rule" id="MF_00815"/>
    </source>
</evidence>
<sequence>MAVSLREYRARIKSTESMKKITRAMELIAASRIIKAQQRAQSAAPYARELTRAVSAVATYSNVDHPLTREPENSQRVAMLIVTSDRGLAGAYSSSVLKEAERLAEKLRGEGKTIDVYLCGRKGEAYHRFRNRPVVRSWTGFSDQPSYDAALEVGTTLIDAFLDEEGEHAVDEVHVVYTRFRSMLLQEPTAVRLLPLEVVEGEERPASDEVLPLYEFEPSAEAVLDNLLPQYVQSRIFFAFLQAAASELAARQKAMKSATDNADELIKKYTRIANQARQAGITQEISEIVGGVNALADAQAGSE</sequence>
<organism>
    <name type="scientific">Nocardioides sp. (strain ATCC BAA-499 / JS614)</name>
    <dbReference type="NCBI Taxonomy" id="196162"/>
    <lineage>
        <taxon>Bacteria</taxon>
        <taxon>Bacillati</taxon>
        <taxon>Actinomycetota</taxon>
        <taxon>Actinomycetes</taxon>
        <taxon>Propionibacteriales</taxon>
        <taxon>Nocardioidaceae</taxon>
        <taxon>Nocardioides</taxon>
    </lineage>
</organism>
<feature type="chain" id="PRO_1000053272" description="ATP synthase gamma chain">
    <location>
        <begin position="1"/>
        <end position="303"/>
    </location>
</feature>
<dbReference type="EMBL" id="CP000509">
    <property type="protein sequence ID" value="ABL81275.1"/>
    <property type="molecule type" value="Genomic_DNA"/>
</dbReference>
<dbReference type="RefSeq" id="WP_011755222.1">
    <property type="nucleotide sequence ID" value="NC_008699.1"/>
</dbReference>
<dbReference type="SMR" id="A1SHJ0"/>
<dbReference type="STRING" id="196162.Noca_1762"/>
<dbReference type="KEGG" id="nca:Noca_1762"/>
<dbReference type="eggNOG" id="COG0224">
    <property type="taxonomic scope" value="Bacteria"/>
</dbReference>
<dbReference type="HOGENOM" id="CLU_050669_0_0_11"/>
<dbReference type="OrthoDB" id="9812769at2"/>
<dbReference type="Proteomes" id="UP000000640">
    <property type="component" value="Chromosome"/>
</dbReference>
<dbReference type="GO" id="GO:0005886">
    <property type="term" value="C:plasma membrane"/>
    <property type="evidence" value="ECO:0007669"/>
    <property type="project" value="UniProtKB-SubCell"/>
</dbReference>
<dbReference type="GO" id="GO:0045259">
    <property type="term" value="C:proton-transporting ATP synthase complex"/>
    <property type="evidence" value="ECO:0007669"/>
    <property type="project" value="UniProtKB-KW"/>
</dbReference>
<dbReference type="GO" id="GO:0005524">
    <property type="term" value="F:ATP binding"/>
    <property type="evidence" value="ECO:0007669"/>
    <property type="project" value="UniProtKB-UniRule"/>
</dbReference>
<dbReference type="GO" id="GO:0046933">
    <property type="term" value="F:proton-transporting ATP synthase activity, rotational mechanism"/>
    <property type="evidence" value="ECO:0007669"/>
    <property type="project" value="UniProtKB-UniRule"/>
</dbReference>
<dbReference type="GO" id="GO:0042777">
    <property type="term" value="P:proton motive force-driven plasma membrane ATP synthesis"/>
    <property type="evidence" value="ECO:0007669"/>
    <property type="project" value="UniProtKB-UniRule"/>
</dbReference>
<dbReference type="CDD" id="cd12151">
    <property type="entry name" value="F1-ATPase_gamma"/>
    <property type="match status" value="1"/>
</dbReference>
<dbReference type="Gene3D" id="3.40.1380.10">
    <property type="match status" value="1"/>
</dbReference>
<dbReference type="Gene3D" id="1.10.287.80">
    <property type="entry name" value="ATP synthase, gamma subunit, helix hairpin domain"/>
    <property type="match status" value="1"/>
</dbReference>
<dbReference type="HAMAP" id="MF_00815">
    <property type="entry name" value="ATP_synth_gamma_bact"/>
    <property type="match status" value="1"/>
</dbReference>
<dbReference type="InterPro" id="IPR035968">
    <property type="entry name" value="ATP_synth_F1_ATPase_gsu"/>
</dbReference>
<dbReference type="InterPro" id="IPR000131">
    <property type="entry name" value="ATP_synth_F1_gsu"/>
</dbReference>
<dbReference type="NCBIfam" id="TIGR01146">
    <property type="entry name" value="ATPsyn_F1gamma"/>
    <property type="match status" value="1"/>
</dbReference>
<dbReference type="NCBIfam" id="NF004145">
    <property type="entry name" value="PRK05621.1-2"/>
    <property type="match status" value="1"/>
</dbReference>
<dbReference type="PANTHER" id="PTHR11693">
    <property type="entry name" value="ATP SYNTHASE GAMMA CHAIN"/>
    <property type="match status" value="1"/>
</dbReference>
<dbReference type="PANTHER" id="PTHR11693:SF22">
    <property type="entry name" value="ATP SYNTHASE SUBUNIT GAMMA, MITOCHONDRIAL"/>
    <property type="match status" value="1"/>
</dbReference>
<dbReference type="Pfam" id="PF00231">
    <property type="entry name" value="ATP-synt"/>
    <property type="match status" value="1"/>
</dbReference>
<dbReference type="PRINTS" id="PR00126">
    <property type="entry name" value="ATPASEGAMMA"/>
</dbReference>
<dbReference type="SUPFAM" id="SSF52943">
    <property type="entry name" value="ATP synthase (F1-ATPase), gamma subunit"/>
    <property type="match status" value="1"/>
</dbReference>
<comment type="function">
    <text evidence="1">Produces ATP from ADP in the presence of a proton gradient across the membrane. The gamma chain is believed to be important in regulating ATPase activity and the flow of protons through the CF(0) complex.</text>
</comment>
<comment type="subunit">
    <text evidence="1">F-type ATPases have 2 components, CF(1) - the catalytic core - and CF(0) - the membrane proton channel. CF(1) has five subunits: alpha(3), beta(3), gamma(1), delta(1), epsilon(1). CF(0) has three main subunits: a, b and c.</text>
</comment>
<comment type="subcellular location">
    <subcellularLocation>
        <location evidence="1">Cell membrane</location>
        <topology evidence="1">Peripheral membrane protein</topology>
    </subcellularLocation>
</comment>
<comment type="similarity">
    <text evidence="1">Belongs to the ATPase gamma chain family.</text>
</comment>
<name>ATPG_NOCSJ</name>
<reference key="1">
    <citation type="submission" date="2006-12" db="EMBL/GenBank/DDBJ databases">
        <title>Complete sequence of chromosome 1 of Nocardioides sp. JS614.</title>
        <authorList>
            <person name="Copeland A."/>
            <person name="Lucas S."/>
            <person name="Lapidus A."/>
            <person name="Barry K."/>
            <person name="Detter J.C."/>
            <person name="Glavina del Rio T."/>
            <person name="Hammon N."/>
            <person name="Israni S."/>
            <person name="Dalin E."/>
            <person name="Tice H."/>
            <person name="Pitluck S."/>
            <person name="Thompson L.S."/>
            <person name="Brettin T."/>
            <person name="Bruce D."/>
            <person name="Han C."/>
            <person name="Tapia R."/>
            <person name="Schmutz J."/>
            <person name="Larimer F."/>
            <person name="Land M."/>
            <person name="Hauser L."/>
            <person name="Kyrpides N."/>
            <person name="Kim E."/>
            <person name="Mattes T."/>
            <person name="Gossett J."/>
            <person name="Richardson P."/>
        </authorList>
    </citation>
    <scope>NUCLEOTIDE SEQUENCE [LARGE SCALE GENOMIC DNA]</scope>
    <source>
        <strain>ATCC BAA-499 / JS614</strain>
    </source>
</reference>